<reference key="1">
    <citation type="journal article" date="1994" name="Mol. Cell. Biol.">
        <title>The Saccharomyces cerevisiae checkpoint gene BUB1 encodes a novel protein kinase.</title>
        <authorList>
            <person name="Roberts B.T."/>
            <person name="Farr K.A."/>
            <person name="Hoyt M.A."/>
        </authorList>
    </citation>
    <scope>NUCLEOTIDE SEQUENCE [GENOMIC DNA]</scope>
    <scope>FUNCTION</scope>
    <scope>CATALYTIC ACTIVITY</scope>
    <scope>COFACTOR</scope>
    <scope>SUBCELLULAR LOCATION</scope>
    <scope>MUTAGENESIS OF LYS-733</scope>
    <source>
        <strain>ATCC 204508 / S288c</strain>
    </source>
</reference>
<reference key="2">
    <citation type="journal article" date="1997" name="Yeast">
        <title>DNA sequence analysis of a 23,002 bp DNA fragment of the right arm of Saccharomyces cerevisiae chromosome VII.</title>
        <authorList>
            <person name="Arroyo J."/>
            <person name="Garcia-Gonzalez M."/>
            <person name="Garcia-Saez M.I."/>
            <person name="Sanchez-Perez M."/>
            <person name="Nombela C."/>
        </authorList>
    </citation>
    <scope>NUCLEOTIDE SEQUENCE [GENOMIC DNA]</scope>
    <source>
        <strain>ATCC 204508 / S288c</strain>
    </source>
</reference>
<reference key="3">
    <citation type="journal article" date="1997" name="Nature">
        <title>The nucleotide sequence of Saccharomyces cerevisiae chromosome VII.</title>
        <authorList>
            <person name="Tettelin H."/>
            <person name="Agostoni-Carbone M.L."/>
            <person name="Albermann K."/>
            <person name="Albers M."/>
            <person name="Arroyo J."/>
            <person name="Backes U."/>
            <person name="Barreiros T."/>
            <person name="Bertani I."/>
            <person name="Bjourson A.J."/>
            <person name="Brueckner M."/>
            <person name="Bruschi C.V."/>
            <person name="Carignani G."/>
            <person name="Castagnoli L."/>
            <person name="Cerdan E."/>
            <person name="Clemente M.L."/>
            <person name="Coblenz A."/>
            <person name="Coglievina M."/>
            <person name="Coissac E."/>
            <person name="Defoor E."/>
            <person name="Del Bino S."/>
            <person name="Delius H."/>
            <person name="Delneri D."/>
            <person name="de Wergifosse P."/>
            <person name="Dujon B."/>
            <person name="Durand P."/>
            <person name="Entian K.-D."/>
            <person name="Eraso P."/>
            <person name="Escribano V."/>
            <person name="Fabiani L."/>
            <person name="Fartmann B."/>
            <person name="Feroli F."/>
            <person name="Feuermann M."/>
            <person name="Frontali L."/>
            <person name="Garcia-Gonzalez M."/>
            <person name="Garcia-Saez M.I."/>
            <person name="Goffeau A."/>
            <person name="Guerreiro P."/>
            <person name="Hani J."/>
            <person name="Hansen M."/>
            <person name="Hebling U."/>
            <person name="Hernandez K."/>
            <person name="Heumann K."/>
            <person name="Hilger F."/>
            <person name="Hofmann B."/>
            <person name="Indge K.J."/>
            <person name="James C.M."/>
            <person name="Klima R."/>
            <person name="Koetter P."/>
            <person name="Kramer B."/>
            <person name="Kramer W."/>
            <person name="Lauquin G."/>
            <person name="Leuther H."/>
            <person name="Louis E.J."/>
            <person name="Maillier E."/>
            <person name="Marconi A."/>
            <person name="Martegani E."/>
            <person name="Mazon M.J."/>
            <person name="Mazzoni C."/>
            <person name="McReynolds A.D.K."/>
            <person name="Melchioretto P."/>
            <person name="Mewes H.-W."/>
            <person name="Minenkova O."/>
            <person name="Mueller-Auer S."/>
            <person name="Nawrocki A."/>
            <person name="Netter P."/>
            <person name="Neu R."/>
            <person name="Nombela C."/>
            <person name="Oliver S.G."/>
            <person name="Panzeri L."/>
            <person name="Paoluzi S."/>
            <person name="Plevani P."/>
            <person name="Portetelle D."/>
            <person name="Portillo F."/>
            <person name="Potier S."/>
            <person name="Purnelle B."/>
            <person name="Rieger M."/>
            <person name="Riles L."/>
            <person name="Rinaldi T."/>
            <person name="Robben J."/>
            <person name="Rodrigues-Pousada C."/>
            <person name="Rodriguez-Belmonte E."/>
            <person name="Rodriguez-Torres A.M."/>
            <person name="Rose M."/>
            <person name="Ruzzi M."/>
            <person name="Saliola M."/>
            <person name="Sanchez-Perez M."/>
            <person name="Schaefer B."/>
            <person name="Schaefer M."/>
            <person name="Scharfe M."/>
            <person name="Schmidheini T."/>
            <person name="Schreer A."/>
            <person name="Skala J."/>
            <person name="Souciet J.-L."/>
            <person name="Steensma H.Y."/>
            <person name="Talla E."/>
            <person name="Thierry A."/>
            <person name="Vandenbol M."/>
            <person name="van der Aart Q.J.M."/>
            <person name="Van Dyck L."/>
            <person name="Vanoni M."/>
            <person name="Verhasselt P."/>
            <person name="Voet M."/>
            <person name="Volckaert G."/>
            <person name="Wambutt R."/>
            <person name="Watson M.D."/>
            <person name="Weber N."/>
            <person name="Wedler E."/>
            <person name="Wedler H."/>
            <person name="Wipfli P."/>
            <person name="Wolf K."/>
            <person name="Wright L.F."/>
            <person name="Zaccaria P."/>
            <person name="Zimmermann M."/>
            <person name="Zollner A."/>
            <person name="Kleine K."/>
        </authorList>
    </citation>
    <scope>NUCLEOTIDE SEQUENCE [LARGE SCALE GENOMIC DNA]</scope>
    <source>
        <strain>ATCC 204508 / S288c</strain>
    </source>
</reference>
<reference key="4">
    <citation type="journal article" date="2014" name="G3 (Bethesda)">
        <title>The reference genome sequence of Saccharomyces cerevisiae: Then and now.</title>
        <authorList>
            <person name="Engel S.R."/>
            <person name="Dietrich F.S."/>
            <person name="Fisk D.G."/>
            <person name="Binkley G."/>
            <person name="Balakrishnan R."/>
            <person name="Costanzo M.C."/>
            <person name="Dwight S.S."/>
            <person name="Hitz B.C."/>
            <person name="Karra K."/>
            <person name="Nash R.S."/>
            <person name="Weng S."/>
            <person name="Wong E.D."/>
            <person name="Lloyd P."/>
            <person name="Skrzypek M.S."/>
            <person name="Miyasato S.R."/>
            <person name="Simison M."/>
            <person name="Cherry J.M."/>
        </authorList>
    </citation>
    <scope>GENOME REANNOTATION</scope>
    <source>
        <strain>ATCC 204508 / S288c</strain>
    </source>
</reference>
<reference key="5">
    <citation type="journal article" date="2000" name="Curr. Biol.">
        <title>Complex formation between Mad1p, Bub1p and Bub3p is crucial for spindle checkpoint function.</title>
        <authorList>
            <person name="Brady D.M."/>
            <person name="Hardwick K.G."/>
        </authorList>
    </citation>
    <scope>IDENTIFICATION IN A COMPLEX WITH MAD1 AND BUB3</scope>
</reference>
<reference key="6">
    <citation type="journal article" date="2003" name="Mol. Cell">
        <title>Requirement of Skp1-Bub1 interaction for kinetochore-mediated activation of the spindle checkpoint.</title>
        <authorList>
            <person name="Kitagawa K."/>
            <person name="Abdulle R."/>
            <person name="Bansal P.K."/>
            <person name="Cagney G."/>
            <person name="Fields S."/>
            <person name="Hieter P."/>
        </authorList>
    </citation>
    <scope>FUNCTION</scope>
    <scope>INTERACTION WITH SKP1</scope>
    <scope>SUBCELLULAR LOCATION</scope>
</reference>
<reference key="7">
    <citation type="journal article" date="2003" name="Nature">
        <title>Global analysis of protein expression in yeast.</title>
        <authorList>
            <person name="Ghaemmaghami S."/>
            <person name="Huh W.-K."/>
            <person name="Bower K."/>
            <person name="Howson R.W."/>
            <person name="Belle A."/>
            <person name="Dephoure N."/>
            <person name="O'Shea E.K."/>
            <person name="Weissman J.S."/>
        </authorList>
    </citation>
    <scope>LEVEL OF PROTEIN EXPRESSION [LARGE SCALE ANALYSIS]</scope>
</reference>
<reference key="8">
    <citation type="journal article" date="2009" name="Science">
        <title>Global analysis of Cdk1 substrate phosphorylation sites provides insights into evolution.</title>
        <authorList>
            <person name="Holt L.J."/>
            <person name="Tuch B.B."/>
            <person name="Villen J."/>
            <person name="Johnson A.D."/>
            <person name="Gygi S.P."/>
            <person name="Morgan D.O."/>
        </authorList>
    </citation>
    <scope>IDENTIFICATION BY MASS SPECTROMETRY [LARGE SCALE ANALYSIS]</scope>
</reference>
<reference key="9">
    <citation type="journal article" date="2012" name="Curr. Biol.">
        <title>Phosphoregulation of Spc105 by Mps1 and PP1 regulates Bub1 localization to kinetochores.</title>
        <authorList>
            <person name="London N."/>
            <person name="Ceto S."/>
            <person name="Ranish J.A."/>
            <person name="Biggins S."/>
        </authorList>
    </citation>
    <scope>INTERACTION WITH SPC105</scope>
</reference>
<reference evidence="15" key="10">
    <citation type="journal article" date="2007" name="Proc. Natl. Acad. Sci. U.S.A.">
        <title>Structural analysis of Bub3 interactions in the mitotic spindle checkpoint.</title>
        <authorList>
            <person name="Larsen N.A."/>
            <person name="Al-Bassam J."/>
            <person name="Wei R.R."/>
            <person name="Harrison S.C."/>
        </authorList>
    </citation>
    <scope>X-RAY CRYSTALLOGRAPHY (1.90 ANGSTROMS) OF 315-350 IN COMPLEX WITH BUB3</scope>
    <scope>IDENTIFICATION IN THE BUB1-BUB3 COMPLEX</scope>
</reference>
<reference evidence="16" key="11">
    <citation type="journal article" date="2013" name="Elife">
        <title>Bub3 reads phosphorylated MELT repeats to promote spindle assembly checkpoint signaling.</title>
        <authorList>
            <person name="Primorac I."/>
            <person name="Weir J.R."/>
            <person name="Chiroli E."/>
            <person name="Gross F."/>
            <person name="Hoffmann I."/>
            <person name="van Gerwen S."/>
            <person name="Ciliberto A."/>
            <person name="Musacchio A."/>
        </authorList>
    </citation>
    <scope>X-RAY CRYSTALLOGRAPHY (1.95 ANGSTROMS) OF 289-359 IN COMPLEX WITH SPC105 AND BUB3</scope>
    <scope>FUNCTION</scope>
    <scope>IDENTIFICATION IN THE BUB1-BUB3 COMPLEX</scope>
    <scope>SUBCELLULAR LOCATION</scope>
    <scope>MUTAGENESIS OF ARG-314</scope>
</reference>
<comment type="function">
    <text evidence="7 11 12">Involved in mitotic spindle assembly checkpoint signaling, a process that delays anaphase until chromosomes are bioriented on the spindle, and in the repair of incorrect mitotic kinetochore-spindle microtubule attachments (PubMed:12769845, PubMed:24066227, PubMed:7969164). The formation of a MAD1-BUB1-BUB3 complex seems to be required for the spindle checkpoint mechanism (PubMed:7969164). Phosphorylates BUB3 (PubMed:7969164). Also autophosphorylates (PubMed:7969164). Associates with centromere (CEN) DNA via interaction with SKP1 (PubMed:12769845). The association with SKP1 is required for the mitotic delay induced by kinetochore tension defects, but not for the arrest induced by spindle depolymerization or kinetochore assembly defects (PubMed:12769845).</text>
</comment>
<comment type="catalytic activity">
    <reaction evidence="14">
        <text>L-seryl-[protein] + ATP = O-phospho-L-seryl-[protein] + ADP + H(+)</text>
        <dbReference type="Rhea" id="RHEA:17989"/>
        <dbReference type="Rhea" id="RHEA-COMP:9863"/>
        <dbReference type="Rhea" id="RHEA-COMP:11604"/>
        <dbReference type="ChEBI" id="CHEBI:15378"/>
        <dbReference type="ChEBI" id="CHEBI:29999"/>
        <dbReference type="ChEBI" id="CHEBI:30616"/>
        <dbReference type="ChEBI" id="CHEBI:83421"/>
        <dbReference type="ChEBI" id="CHEBI:456216"/>
        <dbReference type="EC" id="2.7.11.1"/>
    </reaction>
</comment>
<comment type="catalytic activity">
    <reaction evidence="14">
        <text>L-threonyl-[protein] + ATP = O-phospho-L-threonyl-[protein] + ADP + H(+)</text>
        <dbReference type="Rhea" id="RHEA:46608"/>
        <dbReference type="Rhea" id="RHEA-COMP:11060"/>
        <dbReference type="Rhea" id="RHEA-COMP:11605"/>
        <dbReference type="ChEBI" id="CHEBI:15378"/>
        <dbReference type="ChEBI" id="CHEBI:30013"/>
        <dbReference type="ChEBI" id="CHEBI:30616"/>
        <dbReference type="ChEBI" id="CHEBI:61977"/>
        <dbReference type="ChEBI" id="CHEBI:456216"/>
        <dbReference type="EC" id="2.7.11.1"/>
    </reaction>
</comment>
<comment type="cofactor">
    <cofactor evidence="14">
        <name>Mg(2+)</name>
        <dbReference type="ChEBI" id="CHEBI:18420"/>
    </cofactor>
</comment>
<comment type="subunit">
    <text evidence="6 7 9 10 11">Part of complex consisting of MAD1, BUB1 and BUB3 after activation of spindle checkpoint (PubMed:10837255). Part of the BUB1-BUB3 complex, composed of BUB1 and BUB3 (PubMed:17227844, PubMed:24066227). Interacts with SPC105 (via phosphorylated MELT motifs); the interaction occurs when part of the BUB1-BUB3 complex (PubMed:22521787, PubMed:24066227). Interacts with SKP1; the interaction is direct (PubMed:12769845).</text>
</comment>
<comment type="interaction">
    <interactant intactId="EBI-3816">
        <id>P41695</id>
    </interactant>
    <interactant intactId="EBI-3816">
        <id>P41695</id>
        <label>BUB1</label>
    </interactant>
    <organismsDiffer>false</organismsDiffer>
    <experiments>5</experiments>
</comment>
<comment type="interaction">
    <interactant intactId="EBI-3816">
        <id>P41695</id>
    </interactant>
    <interactant intactId="EBI-3830">
        <id>P26449</id>
        <label>BUB3</label>
    </interactant>
    <organismsDiffer>false</organismsDiffer>
    <experiments>13</experiments>
</comment>
<comment type="interaction">
    <interactant intactId="EBI-3816">
        <id>P41695</id>
    </interactant>
    <interactant intactId="EBI-4212">
        <id>P26309</id>
        <label>CDC20</label>
    </interactant>
    <organismsDiffer>false</organismsDiffer>
    <experiments>2</experiments>
</comment>
<comment type="interaction">
    <interactant intactId="EBI-3816">
        <id>P41695</id>
    </interactant>
    <interactant intactId="EBI-10354">
        <id>P40957</id>
        <label>MAD1</label>
    </interactant>
    <organismsDiffer>false</organismsDiffer>
    <experiments>5</experiments>
</comment>
<comment type="subcellular location">
    <subcellularLocation>
        <location evidence="7 11 12">Nucleus</location>
    </subcellularLocation>
    <subcellularLocation>
        <location evidence="7 11">Chromosome</location>
        <location evidence="7 11">Centromere</location>
        <location evidence="7 11">Kinetochore</location>
    </subcellularLocation>
</comment>
<comment type="PTM">
    <text>Autophosphorylated.</text>
</comment>
<comment type="miscellaneous">
    <text evidence="8">Present with 414 molecules/cell in log phase SD medium.</text>
</comment>
<comment type="similarity">
    <text evidence="2">Belongs to the protein kinase superfamily. Ser/Thr protein kinase family. BUB1 subfamily.</text>
</comment>
<dbReference type="EC" id="2.7.11.1" evidence="14"/>
<dbReference type="EMBL" id="L32027">
    <property type="protein sequence ID" value="AAA64894.1"/>
    <property type="molecule type" value="Genomic_DNA"/>
</dbReference>
<dbReference type="EMBL" id="Z72973">
    <property type="protein sequence ID" value="CAA97214.1"/>
    <property type="molecule type" value="Genomic_DNA"/>
</dbReference>
<dbReference type="EMBL" id="X99074">
    <property type="protein sequence ID" value="CAA67524.1"/>
    <property type="molecule type" value="Genomic_DNA"/>
</dbReference>
<dbReference type="EMBL" id="BK006941">
    <property type="protein sequence ID" value="DAA08282.1"/>
    <property type="molecule type" value="Genomic_DNA"/>
</dbReference>
<dbReference type="PIR" id="S64506">
    <property type="entry name" value="S64506"/>
</dbReference>
<dbReference type="RefSeq" id="NP_011704.3">
    <property type="nucleotide sequence ID" value="NM_001181317.3"/>
</dbReference>
<dbReference type="PDB" id="2I3S">
    <property type="method" value="X-ray"/>
    <property type="resolution" value="1.90 A"/>
    <property type="chains" value="B/D/F=315-350"/>
</dbReference>
<dbReference type="PDB" id="3ESL">
    <property type="method" value="X-ray"/>
    <property type="resolution" value="1.74 A"/>
    <property type="chains" value="A/B=29-230"/>
</dbReference>
<dbReference type="PDB" id="4BL0">
    <property type="method" value="X-ray"/>
    <property type="resolution" value="1.95 A"/>
    <property type="chains" value="B/E=289-359"/>
</dbReference>
<dbReference type="PDBsum" id="2I3S"/>
<dbReference type="PDBsum" id="3ESL"/>
<dbReference type="PDBsum" id="4BL0"/>
<dbReference type="SMR" id="P41695"/>
<dbReference type="BioGRID" id="33440">
    <property type="interactions" value="730"/>
</dbReference>
<dbReference type="ComplexPortal" id="CPX-154">
    <property type="entry name" value="Bub1-Bub3 complex"/>
</dbReference>
<dbReference type="ComplexPortal" id="CPX-3212">
    <property type="entry name" value="Mitotic checkpoint complex, MAD1-MAD2-BUB1-BUB3 subcomplex"/>
</dbReference>
<dbReference type="DIP" id="DIP-2236N"/>
<dbReference type="ELM" id="P41695"/>
<dbReference type="FunCoup" id="P41695">
    <property type="interactions" value="709"/>
</dbReference>
<dbReference type="IntAct" id="P41695">
    <property type="interactions" value="16"/>
</dbReference>
<dbReference type="MINT" id="P41695"/>
<dbReference type="STRING" id="4932.YGR188C"/>
<dbReference type="iPTMnet" id="P41695"/>
<dbReference type="PaxDb" id="4932-YGR188C"/>
<dbReference type="PeptideAtlas" id="P41695"/>
<dbReference type="EnsemblFungi" id="YGR188C_mRNA">
    <property type="protein sequence ID" value="YGR188C"/>
    <property type="gene ID" value="YGR188C"/>
</dbReference>
<dbReference type="GeneID" id="853100"/>
<dbReference type="KEGG" id="sce:YGR188C"/>
<dbReference type="AGR" id="SGD:S000003420"/>
<dbReference type="SGD" id="S000003420">
    <property type="gene designation" value="BUB1"/>
</dbReference>
<dbReference type="VEuPathDB" id="FungiDB:YGR188C"/>
<dbReference type="eggNOG" id="KOG1166">
    <property type="taxonomic scope" value="Eukaryota"/>
</dbReference>
<dbReference type="GeneTree" id="ENSGT00940000167713"/>
<dbReference type="HOGENOM" id="CLU_002115_1_0_1"/>
<dbReference type="InParanoid" id="P41695"/>
<dbReference type="OMA" id="KTLCPNP"/>
<dbReference type="OrthoDB" id="248495at2759"/>
<dbReference type="BioCyc" id="YEAST:G3O-30878-MONOMER"/>
<dbReference type="BRENDA" id="2.7.11.1">
    <property type="organism ID" value="984"/>
</dbReference>
<dbReference type="Reactome" id="R-SCE-141430">
    <property type="pathway name" value="Inactivation of APC/C via direct inhibition of the APC/C complex"/>
</dbReference>
<dbReference type="BioGRID-ORCS" id="853100">
    <property type="hits" value="2 hits in 13 CRISPR screens"/>
</dbReference>
<dbReference type="EvolutionaryTrace" id="P41695"/>
<dbReference type="PRO" id="PR:P41695"/>
<dbReference type="Proteomes" id="UP000002311">
    <property type="component" value="Chromosome VII"/>
</dbReference>
<dbReference type="RNAct" id="P41695">
    <property type="molecule type" value="protein"/>
</dbReference>
<dbReference type="GO" id="GO:1990298">
    <property type="term" value="C:bub1-bub3 complex"/>
    <property type="evidence" value="ECO:0000314"/>
    <property type="project" value="UniProtKB"/>
</dbReference>
<dbReference type="GO" id="GO:0000779">
    <property type="term" value="C:condensed chromosome, centromeric region"/>
    <property type="evidence" value="ECO:0000314"/>
    <property type="project" value="SGD"/>
</dbReference>
<dbReference type="GO" id="GO:0000776">
    <property type="term" value="C:kinetochore"/>
    <property type="evidence" value="ECO:0000314"/>
    <property type="project" value="UniProtKB"/>
</dbReference>
<dbReference type="GO" id="GO:0005634">
    <property type="term" value="C:nucleus"/>
    <property type="evidence" value="ECO:0000314"/>
    <property type="project" value="UniProtKB"/>
</dbReference>
<dbReference type="GO" id="GO:0000940">
    <property type="term" value="C:outer kinetochore"/>
    <property type="evidence" value="ECO:0000250"/>
    <property type="project" value="UniProtKB"/>
</dbReference>
<dbReference type="GO" id="GO:0005524">
    <property type="term" value="F:ATP binding"/>
    <property type="evidence" value="ECO:0007669"/>
    <property type="project" value="UniProtKB-KW"/>
</dbReference>
<dbReference type="GO" id="GO:0042802">
    <property type="term" value="F:identical protein binding"/>
    <property type="evidence" value="ECO:0000353"/>
    <property type="project" value="IntAct"/>
</dbReference>
<dbReference type="GO" id="GO:0004672">
    <property type="term" value="F:protein kinase activity"/>
    <property type="evidence" value="ECO:0000314"/>
    <property type="project" value="SGD"/>
</dbReference>
<dbReference type="GO" id="GO:0106310">
    <property type="term" value="F:protein serine kinase activity"/>
    <property type="evidence" value="ECO:0007669"/>
    <property type="project" value="RHEA"/>
</dbReference>
<dbReference type="GO" id="GO:0004674">
    <property type="term" value="F:protein serine/threonine kinase activity"/>
    <property type="evidence" value="ECO:0007669"/>
    <property type="project" value="UniProtKB-KW"/>
</dbReference>
<dbReference type="GO" id="GO:0034508">
    <property type="term" value="P:centromere complex assembly"/>
    <property type="evidence" value="ECO:0000315"/>
    <property type="project" value="SGD"/>
</dbReference>
<dbReference type="GO" id="GO:0016236">
    <property type="term" value="P:macroautophagy"/>
    <property type="evidence" value="ECO:0000315"/>
    <property type="project" value="SGD"/>
</dbReference>
<dbReference type="GO" id="GO:0051754">
    <property type="term" value="P:meiotic sister chromatid cohesion, centromeric"/>
    <property type="evidence" value="ECO:0000318"/>
    <property type="project" value="GO_Central"/>
</dbReference>
<dbReference type="GO" id="GO:0007094">
    <property type="term" value="P:mitotic spindle assembly checkpoint signaling"/>
    <property type="evidence" value="ECO:0000314"/>
    <property type="project" value="ComplexPortal"/>
</dbReference>
<dbReference type="GO" id="GO:0034501">
    <property type="term" value="P:protein localization to kinetochore"/>
    <property type="evidence" value="ECO:0000315"/>
    <property type="project" value="SGD"/>
</dbReference>
<dbReference type="GO" id="GO:0031134">
    <property type="term" value="P:sister chromatid biorientation"/>
    <property type="evidence" value="ECO:0000315"/>
    <property type="project" value="SGD"/>
</dbReference>
<dbReference type="CDD" id="cd13981">
    <property type="entry name" value="STKc_Bub1_BubR1"/>
    <property type="match status" value="1"/>
</dbReference>
<dbReference type="FunFam" id="1.10.510.10:FF:000721">
    <property type="entry name" value="Checkpoint serine/threonine-protein kinase BUB1"/>
    <property type="match status" value="1"/>
</dbReference>
<dbReference type="Gene3D" id="1.20.58.2070">
    <property type="match status" value="1"/>
</dbReference>
<dbReference type="Gene3D" id="1.25.40.930">
    <property type="match status" value="1"/>
</dbReference>
<dbReference type="Gene3D" id="6.10.20.170">
    <property type="match status" value="1"/>
</dbReference>
<dbReference type="Gene3D" id="1.10.510.10">
    <property type="entry name" value="Transferase(Phosphotransferase) domain 1"/>
    <property type="match status" value="1"/>
</dbReference>
<dbReference type="InterPro" id="IPR015661">
    <property type="entry name" value="Bub1/Mad3"/>
</dbReference>
<dbReference type="InterPro" id="IPR011009">
    <property type="entry name" value="Kinase-like_dom_sf"/>
</dbReference>
<dbReference type="InterPro" id="IPR013212">
    <property type="entry name" value="Mad3/Bub1_I"/>
</dbReference>
<dbReference type="InterPro" id="IPR012572">
    <property type="entry name" value="Mad3/Bub1_II"/>
</dbReference>
<dbReference type="InterPro" id="IPR000719">
    <property type="entry name" value="Prot_kinase_dom"/>
</dbReference>
<dbReference type="InterPro" id="IPR017441">
    <property type="entry name" value="Protein_kinase_ATP_BS"/>
</dbReference>
<dbReference type="InterPro" id="IPR008271">
    <property type="entry name" value="Ser/Thr_kinase_AS"/>
</dbReference>
<dbReference type="PANTHER" id="PTHR14030:SF4">
    <property type="entry name" value="BUB1 KINASE, ISOFORM A-RELATED"/>
    <property type="match status" value="1"/>
</dbReference>
<dbReference type="PANTHER" id="PTHR14030">
    <property type="entry name" value="MITOTIC CHECKPOINT SERINE/THREONINE-PROTEIN KINASE BUB1"/>
    <property type="match status" value="1"/>
</dbReference>
<dbReference type="Pfam" id="PF08311">
    <property type="entry name" value="Mad3_BUB1_I"/>
    <property type="match status" value="1"/>
</dbReference>
<dbReference type="Pfam" id="PF08171">
    <property type="entry name" value="Mad3_BUB1_II"/>
    <property type="match status" value="1"/>
</dbReference>
<dbReference type="Pfam" id="PF00069">
    <property type="entry name" value="Pkinase"/>
    <property type="match status" value="1"/>
</dbReference>
<dbReference type="SMART" id="SM00777">
    <property type="entry name" value="Mad3_BUB1_I"/>
    <property type="match status" value="1"/>
</dbReference>
<dbReference type="SMART" id="SM00220">
    <property type="entry name" value="S_TKc"/>
    <property type="match status" value="1"/>
</dbReference>
<dbReference type="SUPFAM" id="SSF56112">
    <property type="entry name" value="Protein kinase-like (PK-like)"/>
    <property type="match status" value="1"/>
</dbReference>
<dbReference type="PROSITE" id="PS51489">
    <property type="entry name" value="BUB1_N"/>
    <property type="match status" value="1"/>
</dbReference>
<dbReference type="PROSITE" id="PS00107">
    <property type="entry name" value="PROTEIN_KINASE_ATP"/>
    <property type="match status" value="1"/>
</dbReference>
<dbReference type="PROSITE" id="PS50011">
    <property type="entry name" value="PROTEIN_KINASE_DOM"/>
    <property type="match status" value="1"/>
</dbReference>
<dbReference type="PROSITE" id="PS00108">
    <property type="entry name" value="PROTEIN_KINASE_ST"/>
    <property type="match status" value="1"/>
</dbReference>
<gene>
    <name type="primary">BUB1</name>
    <name type="ordered locus">YGR188C</name>
    <name type="ORF">G7542</name>
</gene>
<feature type="chain" id="PRO_0000085676" description="Spindle assembly checkpoint serine/threonine-protein kinase BUB1">
    <location>
        <begin position="1"/>
        <end position="1021"/>
    </location>
</feature>
<feature type="domain" description="BUB1 N-terminal" evidence="3">
    <location>
        <begin position="47"/>
        <end position="212"/>
    </location>
</feature>
<feature type="domain" description="Protein kinase" evidence="2">
    <location>
        <begin position="705"/>
        <end position="1021"/>
    </location>
</feature>
<feature type="region of interest" description="Disordered" evidence="5">
    <location>
        <begin position="1"/>
        <end position="35"/>
    </location>
</feature>
<feature type="region of interest" description="Interaction with BUB3" evidence="11">
    <location>
        <begin position="289"/>
        <end position="359"/>
    </location>
</feature>
<feature type="region of interest" description="Disordered" evidence="5">
    <location>
        <begin position="351"/>
        <end position="370"/>
    </location>
</feature>
<feature type="region of interest" description="Disordered" evidence="5">
    <location>
        <begin position="398"/>
        <end position="420"/>
    </location>
</feature>
<feature type="region of interest" description="Disordered" evidence="5">
    <location>
        <begin position="511"/>
        <end position="545"/>
    </location>
</feature>
<feature type="region of interest" description="Disordered" evidence="5">
    <location>
        <begin position="567"/>
        <end position="600"/>
    </location>
</feature>
<feature type="compositionally biased region" description="Polar residues" evidence="5">
    <location>
        <begin position="19"/>
        <end position="35"/>
    </location>
</feature>
<feature type="compositionally biased region" description="Polar residues" evidence="5">
    <location>
        <begin position="517"/>
        <end position="528"/>
    </location>
</feature>
<feature type="compositionally biased region" description="Basic and acidic residues" evidence="5">
    <location>
        <begin position="569"/>
        <end position="580"/>
    </location>
</feature>
<feature type="compositionally biased region" description="Low complexity" evidence="5">
    <location>
        <begin position="582"/>
        <end position="596"/>
    </location>
</feature>
<feature type="active site" description="Proton acceptor" evidence="2 4">
    <location>
        <position position="833"/>
    </location>
</feature>
<feature type="binding site" evidence="1">
    <location>
        <position position="715"/>
    </location>
    <ligand>
        <name>ATP</name>
        <dbReference type="ChEBI" id="CHEBI:30616"/>
    </ligand>
</feature>
<feature type="binding site" evidence="1">
    <location>
        <position position="716"/>
    </location>
    <ligand>
        <name>ATP</name>
        <dbReference type="ChEBI" id="CHEBI:30616"/>
    </ligand>
</feature>
<feature type="binding site" evidence="1">
    <location>
        <position position="717"/>
    </location>
    <ligand>
        <name>ATP</name>
        <dbReference type="ChEBI" id="CHEBI:30616"/>
    </ligand>
</feature>
<feature type="binding site" evidence="1">
    <location>
        <position position="837"/>
    </location>
    <ligand>
        <name>ATP</name>
        <dbReference type="ChEBI" id="CHEBI:30616"/>
    </ligand>
</feature>
<feature type="binding site" evidence="1">
    <location>
        <position position="838"/>
    </location>
    <ligand>
        <name>ATP</name>
        <dbReference type="ChEBI" id="CHEBI:30616"/>
    </ligand>
</feature>
<feature type="binding site" evidence="1">
    <location>
        <position position="871"/>
    </location>
    <ligand>
        <name>ATP</name>
        <dbReference type="ChEBI" id="CHEBI:30616"/>
    </ligand>
</feature>
<feature type="mutagenesis site" description="Decreases binding to a peptide containing a phosphorylated MELT motif." evidence="11">
    <original>R</original>
    <variation>A</variation>
    <location>
        <position position="314"/>
    </location>
</feature>
<feature type="mutagenesis site" description="Loss of activity." evidence="12">
    <original>K</original>
    <variation>R</variation>
    <location>
        <position position="733"/>
    </location>
</feature>
<feature type="sequence conflict" description="In Ref. 1; AAA64894." evidence="13" ref="1">
    <original>D</original>
    <variation>V</variation>
    <location>
        <position position="531"/>
    </location>
</feature>
<feature type="strand" evidence="18">
    <location>
        <begin position="307"/>
        <end position="309"/>
    </location>
</feature>
<feature type="strand" evidence="17">
    <location>
        <begin position="317"/>
        <end position="321"/>
    </location>
</feature>
<feature type="helix" evidence="17">
    <location>
        <begin position="323"/>
        <end position="326"/>
    </location>
</feature>
<feature type="strand" evidence="18">
    <location>
        <begin position="330"/>
        <end position="332"/>
    </location>
</feature>
<feature type="helix" evidence="17">
    <location>
        <begin position="336"/>
        <end position="343"/>
    </location>
</feature>
<name>BUB1_YEAST</name>
<accession>P41695</accession>
<accession>D6VUX1</accession>
<protein>
    <recommendedName>
        <fullName evidence="13">Spindle assembly checkpoint serine/threonine-protein kinase BUB1</fullName>
        <ecNumber evidence="14">2.7.11.1</ecNumber>
    </recommendedName>
    <alternativeName>
        <fullName>Checkpoint serine/threonine-protein kinase BUB1</fullName>
    </alternativeName>
</protein>
<organism>
    <name type="scientific">Saccharomyces cerevisiae (strain ATCC 204508 / S288c)</name>
    <name type="common">Baker's yeast</name>
    <dbReference type="NCBI Taxonomy" id="559292"/>
    <lineage>
        <taxon>Eukaryota</taxon>
        <taxon>Fungi</taxon>
        <taxon>Dikarya</taxon>
        <taxon>Ascomycota</taxon>
        <taxon>Saccharomycotina</taxon>
        <taxon>Saccharomycetes</taxon>
        <taxon>Saccharomycetales</taxon>
        <taxon>Saccharomycetaceae</taxon>
        <taxon>Saccharomyces</taxon>
    </lineage>
</organism>
<evidence type="ECO:0000250" key="1">
    <source>
        <dbReference type="UniProtKB" id="O43683"/>
    </source>
</evidence>
<evidence type="ECO:0000255" key="2">
    <source>
        <dbReference type="PROSITE-ProRule" id="PRU00159"/>
    </source>
</evidence>
<evidence type="ECO:0000255" key="3">
    <source>
        <dbReference type="PROSITE-ProRule" id="PRU00822"/>
    </source>
</evidence>
<evidence type="ECO:0000255" key="4">
    <source>
        <dbReference type="PROSITE-ProRule" id="PRU10027"/>
    </source>
</evidence>
<evidence type="ECO:0000256" key="5">
    <source>
        <dbReference type="SAM" id="MobiDB-lite"/>
    </source>
</evidence>
<evidence type="ECO:0000269" key="6">
    <source>
    </source>
</evidence>
<evidence type="ECO:0000269" key="7">
    <source>
    </source>
</evidence>
<evidence type="ECO:0000269" key="8">
    <source>
    </source>
</evidence>
<evidence type="ECO:0000269" key="9">
    <source>
    </source>
</evidence>
<evidence type="ECO:0000269" key="10">
    <source>
    </source>
</evidence>
<evidence type="ECO:0000269" key="11">
    <source>
    </source>
</evidence>
<evidence type="ECO:0000269" key="12">
    <source>
    </source>
</evidence>
<evidence type="ECO:0000305" key="13"/>
<evidence type="ECO:0000305" key="14">
    <source>
    </source>
</evidence>
<evidence type="ECO:0007744" key="15">
    <source>
        <dbReference type="PDB" id="2I3S"/>
    </source>
</evidence>
<evidence type="ECO:0007744" key="16">
    <source>
        <dbReference type="PDB" id="4BL0"/>
    </source>
</evidence>
<evidence type="ECO:0007829" key="17">
    <source>
        <dbReference type="PDB" id="2I3S"/>
    </source>
</evidence>
<evidence type="ECO:0007829" key="18">
    <source>
        <dbReference type="PDB" id="4BL0"/>
    </source>
</evidence>
<sequence>MNLDLGSTVRGYESDKDTFPQSKGVSSSQKEQHSQLNQTKIAYEQRLLNDLEDMDDPLDLFLDYMIWISTSYIEVDSESGQEVLRSTMERCLIYIQDMETYRNDPRFLKIWIWYINLFLSNNFHESENTFKYMFNKGIGTKLSLFYEEFSKLLENAQFFLEAKVLLELGAENNCRPYNRLLRSLSNYEDRLREMNIVENQNSVPDSRERLKGRLIYRTAPFFIRKFLTSSLMTDDKENRANLNSNVGVGKSAPNVYQDSIVVADFKSETERLNLNSSKQPSNQRLKNGNKKTSIYADQKQSNNPVYKLINTPGRKPERIVFNFNLIYPENDEEFNTEEILAMIKGLYKVQRRGKKHTEDYTSDKNRKKRKLDVLVERRQDLPSSQPPVVPKSTRIEVFKDDDNPSQSTHHKNTQVQVQTTTSILPLKPVVDGNLAHETPVKPSLTSNASRSPTVTAFSKDAINEVFSMFNQHYSTPGALLDGDDTTTSKFNVFENFTQEFTAKNIEDLTEVKDPKQETVSQQTTSTNETNDRYERLSNSSTRPEKADYMTPIKETTETDVVPIIQTPKEQIRTEDKKSGDNTETQTQLTSTTIQSSPFLTQPEPQAEKLLQTAEHSEKSKEHYPTIIPPFTKIKNQPPVIIENPLSNNLRAKFLSEISPPLFQYNTFYNYNQELKMSSLLKKIHRVSRNENKNPIVDFKKTGDLYCIRGELGEGGYATVYLAESSQGHLRALKVEKPASVWEYYIMSQVEFRLRKSTILKSIINASALHLFLDESYLVLNYASQGTVLDLINLQREKAIDGNGIMDEYLCMFITVELMKVLEKIHEVGIIHGDLKPDNCMIRLEKPGEPLGAHYMRNGEDGWENKGIYLIDFGRSFDMTLLPPGTKFKSNWKADQQDCWEMRAGKPWSYEADYYGLAGVIHSMLFGKFIETIQLQNGRCKLKNPFKRYWKKEIWGVIFDLLLNSGQASNQALPMTEKIVEIRNLIESHLEQHAENHLRNVILSIEEELSHFQYKGKPSRRF</sequence>
<keyword id="KW-0002">3D-structure</keyword>
<keyword id="KW-0067">ATP-binding</keyword>
<keyword id="KW-0131">Cell cycle</keyword>
<keyword id="KW-0137">Centromere</keyword>
<keyword id="KW-0158">Chromosome</keyword>
<keyword id="KW-0418">Kinase</keyword>
<keyword id="KW-0995">Kinetochore</keyword>
<keyword id="KW-0547">Nucleotide-binding</keyword>
<keyword id="KW-0539">Nucleus</keyword>
<keyword id="KW-0597">Phosphoprotein</keyword>
<keyword id="KW-1185">Reference proteome</keyword>
<keyword id="KW-0723">Serine/threonine-protein kinase</keyword>
<keyword id="KW-0808">Transferase</keyword>
<proteinExistence type="evidence at protein level"/>